<evidence type="ECO:0000250" key="1">
    <source>
        <dbReference type="UniProtKB" id="P45548"/>
    </source>
</evidence>
<evidence type="ECO:0000255" key="2">
    <source>
        <dbReference type="PROSITE-ProRule" id="PRU00679"/>
    </source>
</evidence>
<keyword id="KW-0378">Hydrolase</keyword>
<keyword id="KW-0479">Metal-binding</keyword>
<keyword id="KW-1185">Reference proteome</keyword>
<name>PTER_DROWI</name>
<gene>
    <name type="ORF">GK11368</name>
</gene>
<sequence>MSTVQTVLGAITPNLLGRTLTHEHVALDFEHFFRPPPADFERELQAKISMSTLGYVRMYPYSSKENVRFYDEEALEAAKKDVLLYKKHGGGSIVENSSYGLKRNLEFIVDLAKSTGVHFIAGTGHYIHAVQDASHASLTVEQMSDLYSKDIITGIQVNGETVKCGFIGEVASVYPVHEFEKHSLQAAGEIQEVLGCGVSLHPHRVTNAPFEIMRLYMEAGGRANKCVMSHLDRTIFDIDELLEFAKLGCYMQYDLFGTECSYYQLNSTINMLSDGQRIDNLMKLIEEGLVDRLLMSHDIHTKHRLTSYGGHGYHHIHMNILPRMFAKGVTIEQVEQMTVTNPANWLAFNP</sequence>
<dbReference type="EC" id="3.1.-.-"/>
<dbReference type="EMBL" id="CH964232">
    <property type="protein sequence ID" value="EDW80805.1"/>
    <property type="molecule type" value="Genomic_DNA"/>
</dbReference>
<dbReference type="SMR" id="B4NAJ1"/>
<dbReference type="STRING" id="7260.B4NAJ1"/>
<dbReference type="EnsemblMetazoa" id="FBtr0242019">
    <property type="protein sequence ID" value="FBpp0240511"/>
    <property type="gene ID" value="FBgn0213379"/>
</dbReference>
<dbReference type="EnsemblMetazoa" id="XM_002069783.4">
    <property type="protein sequence ID" value="XP_002069819.1"/>
    <property type="gene ID" value="LOC6647896"/>
</dbReference>
<dbReference type="GeneID" id="6647896"/>
<dbReference type="KEGG" id="dwi:6647896"/>
<dbReference type="eggNOG" id="ENOG502QQQR">
    <property type="taxonomic scope" value="Eukaryota"/>
</dbReference>
<dbReference type="HOGENOM" id="CLU_054760_0_1_1"/>
<dbReference type="OMA" id="MVKCGFI"/>
<dbReference type="OrthoDB" id="9998343at2759"/>
<dbReference type="PhylomeDB" id="B4NAJ1"/>
<dbReference type="Proteomes" id="UP000007798">
    <property type="component" value="Unassembled WGS sequence"/>
</dbReference>
<dbReference type="GO" id="GO:0016788">
    <property type="term" value="F:hydrolase activity, acting on ester bonds"/>
    <property type="evidence" value="ECO:0007669"/>
    <property type="project" value="InterPro"/>
</dbReference>
<dbReference type="GO" id="GO:0008270">
    <property type="term" value="F:zinc ion binding"/>
    <property type="evidence" value="ECO:0007669"/>
    <property type="project" value="InterPro"/>
</dbReference>
<dbReference type="GO" id="GO:0009056">
    <property type="term" value="P:catabolic process"/>
    <property type="evidence" value="ECO:0007669"/>
    <property type="project" value="InterPro"/>
</dbReference>
<dbReference type="CDD" id="cd00530">
    <property type="entry name" value="PTE"/>
    <property type="match status" value="1"/>
</dbReference>
<dbReference type="Gene3D" id="3.20.20.140">
    <property type="entry name" value="Metal-dependent hydrolases"/>
    <property type="match status" value="1"/>
</dbReference>
<dbReference type="InterPro" id="IPR017947">
    <property type="entry name" value="AryldialkylPase_Zn-BS"/>
</dbReference>
<dbReference type="InterPro" id="IPR032466">
    <property type="entry name" value="Metal_Hydrolase"/>
</dbReference>
<dbReference type="InterPro" id="IPR001559">
    <property type="entry name" value="Phosphotriesterase"/>
</dbReference>
<dbReference type="PANTHER" id="PTHR10819">
    <property type="entry name" value="PHOSPHOTRIESTERASE-RELATED"/>
    <property type="match status" value="1"/>
</dbReference>
<dbReference type="PANTHER" id="PTHR10819:SF3">
    <property type="entry name" value="PHOSPHOTRIESTERASE-RELATED PROTEIN"/>
    <property type="match status" value="1"/>
</dbReference>
<dbReference type="Pfam" id="PF02126">
    <property type="entry name" value="PTE"/>
    <property type="match status" value="1"/>
</dbReference>
<dbReference type="SUPFAM" id="SSF51556">
    <property type="entry name" value="Metallo-dependent hydrolases"/>
    <property type="match status" value="1"/>
</dbReference>
<dbReference type="PROSITE" id="PS01322">
    <property type="entry name" value="PHOSPHOTRIESTERASE_1"/>
    <property type="match status" value="1"/>
</dbReference>
<dbReference type="PROSITE" id="PS51347">
    <property type="entry name" value="PHOSPHOTRIESTERASE_2"/>
    <property type="match status" value="1"/>
</dbReference>
<reference key="1">
    <citation type="journal article" date="2007" name="Nature">
        <title>Evolution of genes and genomes on the Drosophila phylogeny.</title>
        <authorList>
            <consortium name="Drosophila 12 genomes consortium"/>
        </authorList>
    </citation>
    <scope>NUCLEOTIDE SEQUENCE [LARGE SCALE GENOMIC DNA]</scope>
    <source>
        <strain>Tucson 14030-0811.24</strain>
    </source>
</reference>
<proteinExistence type="inferred from homology"/>
<comment type="cofactor">
    <cofactor evidence="1">
        <name>a divalent metal cation</name>
        <dbReference type="ChEBI" id="CHEBI:60240"/>
    </cofactor>
    <text evidence="1">Binds 2 divalent metal cations per subunit.</text>
</comment>
<comment type="similarity">
    <text evidence="2">Belongs to the metallo-dependent hydrolases superfamily. Phosphotriesterase family.</text>
</comment>
<protein>
    <recommendedName>
        <fullName>Phosphotriesterase-related protein</fullName>
        <ecNumber>3.1.-.-</ecNumber>
    </recommendedName>
    <alternativeName>
        <fullName>Parathion hydrolase-related protein</fullName>
    </alternativeName>
</protein>
<accession>B4NAJ1</accession>
<organism>
    <name type="scientific">Drosophila willistoni</name>
    <name type="common">Fruit fly</name>
    <dbReference type="NCBI Taxonomy" id="7260"/>
    <lineage>
        <taxon>Eukaryota</taxon>
        <taxon>Metazoa</taxon>
        <taxon>Ecdysozoa</taxon>
        <taxon>Arthropoda</taxon>
        <taxon>Hexapoda</taxon>
        <taxon>Insecta</taxon>
        <taxon>Pterygota</taxon>
        <taxon>Neoptera</taxon>
        <taxon>Endopterygota</taxon>
        <taxon>Diptera</taxon>
        <taxon>Brachycera</taxon>
        <taxon>Muscomorpha</taxon>
        <taxon>Ephydroidea</taxon>
        <taxon>Drosophilidae</taxon>
        <taxon>Drosophila</taxon>
        <taxon>Sophophora</taxon>
    </lineage>
</organism>
<feature type="chain" id="PRO_0000388681" description="Phosphotriesterase-related protein">
    <location>
        <begin position="1"/>
        <end position="350"/>
    </location>
</feature>
<feature type="binding site" evidence="1">
    <location>
        <position position="22"/>
    </location>
    <ligand>
        <name>a divalent metal cation</name>
        <dbReference type="ChEBI" id="CHEBI:60240"/>
        <label>1</label>
    </ligand>
</feature>
<feature type="binding site" evidence="1">
    <location>
        <position position="24"/>
    </location>
    <ligand>
        <name>a divalent metal cation</name>
        <dbReference type="ChEBI" id="CHEBI:60240"/>
        <label>1</label>
    </ligand>
</feature>
<feature type="binding site" evidence="1">
    <location>
        <position position="169"/>
    </location>
    <ligand>
        <name>a divalent metal cation</name>
        <dbReference type="ChEBI" id="CHEBI:60240"/>
        <label>1</label>
    </ligand>
</feature>
<feature type="binding site" evidence="1">
    <location>
        <position position="169"/>
    </location>
    <ligand>
        <name>a divalent metal cation</name>
        <dbReference type="ChEBI" id="CHEBI:60240"/>
        <label>2</label>
    </ligand>
</feature>
<feature type="binding site" evidence="1">
    <location>
        <position position="201"/>
    </location>
    <ligand>
        <name>a divalent metal cation</name>
        <dbReference type="ChEBI" id="CHEBI:60240"/>
        <label>2</label>
    </ligand>
</feature>
<feature type="binding site" evidence="1">
    <location>
        <position position="230"/>
    </location>
    <ligand>
        <name>a divalent metal cation</name>
        <dbReference type="ChEBI" id="CHEBI:60240"/>
        <label>2</label>
    </ligand>
</feature>
<feature type="binding site" evidence="1">
    <location>
        <position position="298"/>
    </location>
    <ligand>
        <name>a divalent metal cation</name>
        <dbReference type="ChEBI" id="CHEBI:60240"/>
        <label>1</label>
    </ligand>
</feature>